<comment type="function">
    <text evidence="1">RNA-binding protein involved in the correct localization of transcripts in the cell. RNA localization is a widespread mechanism for achieving localized protein synthesis. Required for the asymmetric localization to the daughter cell nucleus of the ASH1 transcript, coding for a specific repressor of transcription. Overexpression inhibits translation of the ASH1 transcript. Involved in the stability of transcripts, like the MTL1 mRNA. Involved in structural and functional organization of telomeric chromatin and regulates silencing at the HMR locus (By similarity).</text>
</comment>
<comment type="subunit">
    <text evidence="1">Binds RNA.</text>
</comment>
<comment type="subcellular location">
    <subcellularLocation>
        <location evidence="1">Cytoplasm</location>
    </subcellularLocation>
    <subcellularLocation>
        <location evidence="1">Cytoplasm</location>
        <location evidence="1">P-body</location>
    </subcellularLocation>
    <subcellularLocation>
        <location evidence="1">Nucleus</location>
    </subcellularLocation>
    <subcellularLocation>
        <location evidence="1">Chromosome</location>
        <location evidence="1">Telomere</location>
    </subcellularLocation>
</comment>
<comment type="PTM">
    <text evidence="1">Phosphorylated by the plasma membrane-Anchored casein kinase YCK1. Phosphorylation at its C-terminus reduces its RNA-binding capacity (By similarity).</text>
</comment>
<comment type="similarity">
    <text evidence="5">Belongs to the HEK2 family.</text>
</comment>
<reference key="1">
    <citation type="journal article" date="2009" name="Proc. Natl. Acad. Sci. U.S.A.">
        <title>Eukaryote-to-eukaryote gene transfer events revealed by the genome sequence of the wine yeast Saccharomyces cerevisiae EC1118.</title>
        <authorList>
            <person name="Novo M."/>
            <person name="Bigey F."/>
            <person name="Beyne E."/>
            <person name="Galeote V."/>
            <person name="Gavory F."/>
            <person name="Mallet S."/>
            <person name="Cambon B."/>
            <person name="Legras J.-L."/>
            <person name="Wincker P."/>
            <person name="Casaregola S."/>
            <person name="Dequin S."/>
        </authorList>
    </citation>
    <scope>NUCLEOTIDE SEQUENCE [LARGE SCALE GENOMIC DNA]</scope>
    <source>
        <strain>Lalvin EC1118 / Prise de mousse</strain>
    </source>
</reference>
<keyword id="KW-0156">Chromatin regulator</keyword>
<keyword id="KW-0158">Chromosome</keyword>
<keyword id="KW-0963">Cytoplasm</keyword>
<keyword id="KW-0509">mRNA transport</keyword>
<keyword id="KW-0539">Nucleus</keyword>
<keyword id="KW-0597">Phosphoprotein</keyword>
<keyword id="KW-0677">Repeat</keyword>
<keyword id="KW-0694">RNA-binding</keyword>
<keyword id="KW-0779">Telomere</keyword>
<keyword id="KW-0810">Translation regulation</keyword>
<keyword id="KW-0813">Transport</keyword>
<dbReference type="EMBL" id="FN393060">
    <property type="protein sequence ID" value="CAY77753.1"/>
    <property type="molecule type" value="Genomic_DNA"/>
</dbReference>
<dbReference type="SMR" id="C8Z3W4"/>
<dbReference type="HOGENOM" id="CLU_022670_2_0_1"/>
<dbReference type="OrthoDB" id="41596at4893"/>
<dbReference type="Proteomes" id="UP000000286">
    <property type="component" value="Chromosome II, Scaffold EC1118_1B15"/>
</dbReference>
<dbReference type="GO" id="GO:0000781">
    <property type="term" value="C:chromosome, telomeric region"/>
    <property type="evidence" value="ECO:0007669"/>
    <property type="project" value="UniProtKB-SubCell"/>
</dbReference>
<dbReference type="GO" id="GO:0005634">
    <property type="term" value="C:nucleus"/>
    <property type="evidence" value="ECO:0007669"/>
    <property type="project" value="UniProtKB-SubCell"/>
</dbReference>
<dbReference type="GO" id="GO:0000932">
    <property type="term" value="C:P-body"/>
    <property type="evidence" value="ECO:0007669"/>
    <property type="project" value="UniProtKB-SubCell"/>
</dbReference>
<dbReference type="GO" id="GO:0003723">
    <property type="term" value="F:RNA binding"/>
    <property type="evidence" value="ECO:0007669"/>
    <property type="project" value="UniProtKB-KW"/>
</dbReference>
<dbReference type="GO" id="GO:0006325">
    <property type="term" value="P:chromatin organization"/>
    <property type="evidence" value="ECO:0007669"/>
    <property type="project" value="UniProtKB-KW"/>
</dbReference>
<dbReference type="GO" id="GO:0051028">
    <property type="term" value="P:mRNA transport"/>
    <property type="evidence" value="ECO:0007669"/>
    <property type="project" value="UniProtKB-KW"/>
</dbReference>
<dbReference type="GO" id="GO:0006417">
    <property type="term" value="P:regulation of translation"/>
    <property type="evidence" value="ECO:0007669"/>
    <property type="project" value="UniProtKB-KW"/>
</dbReference>
<dbReference type="CDD" id="cd00105">
    <property type="entry name" value="KH-I"/>
    <property type="match status" value="1"/>
</dbReference>
<dbReference type="CDD" id="cd22456">
    <property type="entry name" value="KH-I_Rnc1_rpt2"/>
    <property type="match status" value="1"/>
</dbReference>
<dbReference type="Gene3D" id="3.30.1370.10">
    <property type="entry name" value="K Homology domain, type 1"/>
    <property type="match status" value="3"/>
</dbReference>
<dbReference type="InterPro" id="IPR004087">
    <property type="entry name" value="KH_dom"/>
</dbReference>
<dbReference type="InterPro" id="IPR004088">
    <property type="entry name" value="KH_dom_type_1"/>
</dbReference>
<dbReference type="InterPro" id="IPR036612">
    <property type="entry name" value="KH_dom_type_1_sf"/>
</dbReference>
<dbReference type="PANTHER" id="PTHR10288">
    <property type="entry name" value="KH DOMAIN CONTAINING RNA BINDING PROTEIN"/>
    <property type="match status" value="1"/>
</dbReference>
<dbReference type="Pfam" id="PF00013">
    <property type="entry name" value="KH_1"/>
    <property type="match status" value="3"/>
</dbReference>
<dbReference type="SMART" id="SM00322">
    <property type="entry name" value="KH"/>
    <property type="match status" value="3"/>
</dbReference>
<dbReference type="SUPFAM" id="SSF54791">
    <property type="entry name" value="Eukaryotic type KH-domain (KH-domain type I)"/>
    <property type="match status" value="3"/>
</dbReference>
<dbReference type="PROSITE" id="PS50084">
    <property type="entry name" value="KH_TYPE_1"/>
    <property type="match status" value="3"/>
</dbReference>
<organism>
    <name type="scientific">Saccharomyces cerevisiae (strain Lalvin EC1118 / Prise de mousse)</name>
    <name type="common">Baker's yeast</name>
    <dbReference type="NCBI Taxonomy" id="643680"/>
    <lineage>
        <taxon>Eukaryota</taxon>
        <taxon>Fungi</taxon>
        <taxon>Dikarya</taxon>
        <taxon>Ascomycota</taxon>
        <taxon>Saccharomycotina</taxon>
        <taxon>Saccharomycetes</taxon>
        <taxon>Saccharomycetales</taxon>
        <taxon>Saccharomycetaceae</taxon>
        <taxon>Saccharomyces</taxon>
    </lineage>
</organism>
<protein>
    <recommendedName>
        <fullName>Heterogeneous nuclear rnp K-like protein 2</fullName>
    </recommendedName>
    <alternativeName>
        <fullName>KH domain-containing protein 1</fullName>
    </alternativeName>
</protein>
<feature type="chain" id="PRO_0000408195" description="Heterogeneous nuclear rnp K-like protein 2">
    <location>
        <begin position="1"/>
        <end position="381"/>
    </location>
</feature>
<feature type="domain" description="KH 1" evidence="3">
    <location>
        <begin position="43"/>
        <end position="107"/>
    </location>
</feature>
<feature type="domain" description="KH 2" evidence="3">
    <location>
        <begin position="156"/>
        <end position="221"/>
    </location>
</feature>
<feature type="domain" description="KH 3" evidence="3">
    <location>
        <begin position="258"/>
        <end position="326"/>
    </location>
</feature>
<feature type="region of interest" description="Disordered" evidence="4">
    <location>
        <begin position="1"/>
        <end position="34"/>
    </location>
</feature>
<feature type="region of interest" description="Disordered" evidence="4">
    <location>
        <begin position="344"/>
        <end position="381"/>
    </location>
</feature>
<feature type="compositionally biased region" description="Low complexity" evidence="4">
    <location>
        <begin position="15"/>
        <end position="33"/>
    </location>
</feature>
<feature type="compositionally biased region" description="Basic and acidic residues" evidence="4">
    <location>
        <begin position="369"/>
        <end position="381"/>
    </location>
</feature>
<feature type="modified residue" description="Phosphoserine" evidence="2">
    <location>
        <position position="358"/>
    </location>
</feature>
<feature type="modified residue" description="Phosphoserine" evidence="2">
    <location>
        <position position="360"/>
    </location>
</feature>
<feature type="modified residue" description="Phosphoserine" evidence="2">
    <location>
        <position position="362"/>
    </location>
</feature>
<evidence type="ECO:0000250" key="1"/>
<evidence type="ECO:0000250" key="2">
    <source>
        <dbReference type="UniProtKB" id="P38199"/>
    </source>
</evidence>
<evidence type="ECO:0000255" key="3">
    <source>
        <dbReference type="PROSITE-ProRule" id="PRU00117"/>
    </source>
</evidence>
<evidence type="ECO:0000256" key="4">
    <source>
        <dbReference type="SAM" id="MobiDB-lite"/>
    </source>
</evidence>
<evidence type="ECO:0000305" key="5"/>
<name>HEK2_YEAS8</name>
<sequence>MSQFFEAATPVAIPTNNTNGGSSDAGSAATGGAPVVGTTAQPTINHRLLLSLKEAAKIIGTKGSTISRIRAANSVKIGISEKVPGCSDRILSCAGNVINVANAIGDIVDVLNKRNPENEDAAEGEAEEHYYFHFLNHILPAPSKDEIRDLQQLEDIGYVRLIVANSHISSIIGKAGATIKSLINKHGVKIVASKDFLPASDERIIEIQGFPGSITNVLIEISEIILSDVDVRFSTERSYFPHLKKSSGEPTSPSTSSNTRIELKIPELYVGAIIGRGMNRIKNLKTFTKTNIVVERKDDDDKDENFRKFIITSKFPKNVKLAESMLLKNLNTEIEKRENYKRKLEAAEGDATVVTERSDSASFLEEKEEPQKNHDNKEEQS</sequence>
<proteinExistence type="inferred from homology"/>
<gene>
    <name type="primary">HEK2</name>
    <name type="synonym">KHD1</name>
    <name type="ORF">EC1118_1B15_0914g</name>
</gene>
<accession>C8Z3W4</accession>